<evidence type="ECO:0000255" key="1">
    <source>
        <dbReference type="HAMAP-Rule" id="MF_01457"/>
    </source>
</evidence>
<evidence type="ECO:0000256" key="2">
    <source>
        <dbReference type="SAM" id="MobiDB-lite"/>
    </source>
</evidence>
<proteinExistence type="inferred from homology"/>
<reference key="1">
    <citation type="journal article" date="2008" name="Genome Res.">
        <title>Genome sequence of the beta-rhizobium Cupriavidus taiwanensis and comparative genomics of rhizobia.</title>
        <authorList>
            <person name="Amadou C."/>
            <person name="Pascal G."/>
            <person name="Mangenot S."/>
            <person name="Glew M."/>
            <person name="Bontemps C."/>
            <person name="Capela D."/>
            <person name="Carrere S."/>
            <person name="Cruveiller S."/>
            <person name="Dossat C."/>
            <person name="Lajus A."/>
            <person name="Marchetti M."/>
            <person name="Poinsot V."/>
            <person name="Rouy Z."/>
            <person name="Servin B."/>
            <person name="Saad M."/>
            <person name="Schenowitz C."/>
            <person name="Barbe V."/>
            <person name="Batut J."/>
            <person name="Medigue C."/>
            <person name="Masson-Boivin C."/>
        </authorList>
    </citation>
    <scope>NUCLEOTIDE SEQUENCE [LARGE SCALE GENOMIC DNA]</scope>
    <source>
        <strain>DSM 17343 / BCRC 17206 / CCUG 44338 / CIP 107171 / LMG 19424 / R1</strain>
    </source>
</reference>
<keyword id="KW-0975">Bacterial flagellum</keyword>
<keyword id="KW-0973">c-di-GMP</keyword>
<keyword id="KW-0547">Nucleotide-binding</keyword>
<sequence>MLREPMNQHDAPGPAETGADSDAETDAETDAETDAGAADDRYRLSHNSQIGTVLRDLAWQKCMLSVRTRTAHQFVTSILHVDPVNRTFVFDWCNAEPERMSLMTSEENAFSGLLRGVPVNFVVGQPAATRYDDGPAFVAEFPEKLYHFQRRRHFRARTLVTKGYRCEMSLPDKTVLGLDIADLSLSGVGLRSRTVTADHLPVGTTVAKCRLDFRELGKLELDMQVVGHWLVGRDDSAIHHFGCAFVNPDGRMENFLQRLVFALELAHRG</sequence>
<protein>
    <recommendedName>
        <fullName evidence="1">Flagellar brake protein YcgR</fullName>
    </recommendedName>
    <alternativeName>
        <fullName evidence="1">Cyclic di-GMP binding protein YcgR</fullName>
    </alternativeName>
</protein>
<comment type="function">
    <text evidence="1">Acts as a flagellar brake, regulating swimming and swarming in a bis-(3'-5') cyclic diguanylic acid (c-di-GMP)-dependent manner. Binds 1 c-di-GMP dimer per subunit. Increasing levels of c-di-GMP lead to decreased motility.</text>
</comment>
<comment type="subunit">
    <text evidence="1">Monomer. Interacts with the flagellar basal bodies.</text>
</comment>
<comment type="subcellular location">
    <subcellularLocation>
        <location evidence="1">Bacterial flagellum basal body</location>
    </subcellularLocation>
</comment>
<comment type="similarity">
    <text evidence="1">Belongs to the YcgR family.</text>
</comment>
<organism>
    <name type="scientific">Cupriavidus taiwanensis (strain DSM 17343 / BCRC 17206 / CCUG 44338 / CIP 107171 / LMG 19424 / R1)</name>
    <name type="common">Ralstonia taiwanensis (strain LMG 19424)</name>
    <dbReference type="NCBI Taxonomy" id="977880"/>
    <lineage>
        <taxon>Bacteria</taxon>
        <taxon>Pseudomonadati</taxon>
        <taxon>Pseudomonadota</taxon>
        <taxon>Betaproteobacteria</taxon>
        <taxon>Burkholderiales</taxon>
        <taxon>Burkholderiaceae</taxon>
        <taxon>Cupriavidus</taxon>
    </lineage>
</organism>
<gene>
    <name evidence="1" type="primary">ycgR</name>
    <name type="ordered locus">RALTA_B2277</name>
</gene>
<name>YCGR_CUPTR</name>
<accession>B3RD79</accession>
<feature type="chain" id="PRO_0000395270" description="Flagellar brake protein YcgR">
    <location>
        <begin position="1"/>
        <end position="269"/>
    </location>
</feature>
<feature type="domain" description="PilZ" evidence="1">
    <location>
        <begin position="149"/>
        <end position="261"/>
    </location>
</feature>
<feature type="region of interest" description="Disordered" evidence="2">
    <location>
        <begin position="1"/>
        <end position="42"/>
    </location>
</feature>
<feature type="compositionally biased region" description="Acidic residues" evidence="2">
    <location>
        <begin position="19"/>
        <end position="33"/>
    </location>
</feature>
<dbReference type="EMBL" id="CU633750">
    <property type="protein sequence ID" value="CAQ72854.1"/>
    <property type="molecule type" value="Genomic_DNA"/>
</dbReference>
<dbReference type="RefSeq" id="WP_012357066.1">
    <property type="nucleotide sequence ID" value="NC_010530.1"/>
</dbReference>
<dbReference type="SMR" id="B3RD79"/>
<dbReference type="GeneID" id="29763785"/>
<dbReference type="KEGG" id="cti:RALTA_B2277"/>
<dbReference type="eggNOG" id="COG5581">
    <property type="taxonomic scope" value="Bacteria"/>
</dbReference>
<dbReference type="HOGENOM" id="CLU_086025_0_0_4"/>
<dbReference type="BioCyc" id="CTAI977880:RALTA_RS26535-MONOMER"/>
<dbReference type="Proteomes" id="UP000001692">
    <property type="component" value="Chromosome 2"/>
</dbReference>
<dbReference type="GO" id="GO:0009425">
    <property type="term" value="C:bacterial-type flagellum basal body"/>
    <property type="evidence" value="ECO:0007669"/>
    <property type="project" value="UniProtKB-SubCell"/>
</dbReference>
<dbReference type="GO" id="GO:0035438">
    <property type="term" value="F:cyclic-di-GMP binding"/>
    <property type="evidence" value="ECO:0007669"/>
    <property type="project" value="UniProtKB-UniRule"/>
</dbReference>
<dbReference type="GO" id="GO:0071973">
    <property type="term" value="P:bacterial-type flagellum-dependent cell motility"/>
    <property type="evidence" value="ECO:0007669"/>
    <property type="project" value="UniProtKB-UniRule"/>
</dbReference>
<dbReference type="GO" id="GO:0071945">
    <property type="term" value="P:regulation of bacterial-type flagellum-dependent cell motility by regulation of motor speed"/>
    <property type="evidence" value="ECO:0007669"/>
    <property type="project" value="UniProtKB-UniRule"/>
</dbReference>
<dbReference type="Gene3D" id="2.30.110.10">
    <property type="entry name" value="Electron Transport, Fmn-binding Protein, Chain A"/>
    <property type="match status" value="1"/>
</dbReference>
<dbReference type="Gene3D" id="2.40.10.220">
    <property type="entry name" value="predicted glycosyltransferase like domains"/>
    <property type="match status" value="1"/>
</dbReference>
<dbReference type="HAMAP" id="MF_01457">
    <property type="entry name" value="YcgR"/>
    <property type="match status" value="1"/>
</dbReference>
<dbReference type="InterPro" id="IPR009875">
    <property type="entry name" value="PilZ_domain"/>
</dbReference>
<dbReference type="InterPro" id="IPR012349">
    <property type="entry name" value="Split_barrel_FMN-bd"/>
</dbReference>
<dbReference type="InterPro" id="IPR023787">
    <property type="entry name" value="T3SS_YcgR"/>
</dbReference>
<dbReference type="InterPro" id="IPR009926">
    <property type="entry name" value="T3SS_YcgR_PilZN"/>
</dbReference>
<dbReference type="Pfam" id="PF07238">
    <property type="entry name" value="PilZ"/>
    <property type="match status" value="1"/>
</dbReference>
<dbReference type="Pfam" id="PF07317">
    <property type="entry name" value="PilZN"/>
    <property type="match status" value="1"/>
</dbReference>